<reference key="1">
    <citation type="journal article" date="2000" name="Science">
        <title>The genome sequence of Drosophila melanogaster.</title>
        <authorList>
            <person name="Adams M.D."/>
            <person name="Celniker S.E."/>
            <person name="Holt R.A."/>
            <person name="Evans C.A."/>
            <person name="Gocayne J.D."/>
            <person name="Amanatides P.G."/>
            <person name="Scherer S.E."/>
            <person name="Li P.W."/>
            <person name="Hoskins R.A."/>
            <person name="Galle R.F."/>
            <person name="George R.A."/>
            <person name="Lewis S.E."/>
            <person name="Richards S."/>
            <person name="Ashburner M."/>
            <person name="Henderson S.N."/>
            <person name="Sutton G.G."/>
            <person name="Wortman J.R."/>
            <person name="Yandell M.D."/>
            <person name="Zhang Q."/>
            <person name="Chen L.X."/>
            <person name="Brandon R.C."/>
            <person name="Rogers Y.-H.C."/>
            <person name="Blazej R.G."/>
            <person name="Champe M."/>
            <person name="Pfeiffer B.D."/>
            <person name="Wan K.H."/>
            <person name="Doyle C."/>
            <person name="Baxter E.G."/>
            <person name="Helt G."/>
            <person name="Nelson C.R."/>
            <person name="Miklos G.L.G."/>
            <person name="Abril J.F."/>
            <person name="Agbayani A."/>
            <person name="An H.-J."/>
            <person name="Andrews-Pfannkoch C."/>
            <person name="Baldwin D."/>
            <person name="Ballew R.M."/>
            <person name="Basu A."/>
            <person name="Baxendale J."/>
            <person name="Bayraktaroglu L."/>
            <person name="Beasley E.M."/>
            <person name="Beeson K.Y."/>
            <person name="Benos P.V."/>
            <person name="Berman B.P."/>
            <person name="Bhandari D."/>
            <person name="Bolshakov S."/>
            <person name="Borkova D."/>
            <person name="Botchan M.R."/>
            <person name="Bouck J."/>
            <person name="Brokstein P."/>
            <person name="Brottier P."/>
            <person name="Burtis K.C."/>
            <person name="Busam D.A."/>
            <person name="Butler H."/>
            <person name="Cadieu E."/>
            <person name="Center A."/>
            <person name="Chandra I."/>
            <person name="Cherry J.M."/>
            <person name="Cawley S."/>
            <person name="Dahlke C."/>
            <person name="Davenport L.B."/>
            <person name="Davies P."/>
            <person name="de Pablos B."/>
            <person name="Delcher A."/>
            <person name="Deng Z."/>
            <person name="Mays A.D."/>
            <person name="Dew I."/>
            <person name="Dietz S.M."/>
            <person name="Dodson K."/>
            <person name="Doup L.E."/>
            <person name="Downes M."/>
            <person name="Dugan-Rocha S."/>
            <person name="Dunkov B.C."/>
            <person name="Dunn P."/>
            <person name="Durbin K.J."/>
            <person name="Evangelista C.C."/>
            <person name="Ferraz C."/>
            <person name="Ferriera S."/>
            <person name="Fleischmann W."/>
            <person name="Fosler C."/>
            <person name="Gabrielian A.E."/>
            <person name="Garg N.S."/>
            <person name="Gelbart W.M."/>
            <person name="Glasser K."/>
            <person name="Glodek A."/>
            <person name="Gong F."/>
            <person name="Gorrell J.H."/>
            <person name="Gu Z."/>
            <person name="Guan P."/>
            <person name="Harris M."/>
            <person name="Harris N.L."/>
            <person name="Harvey D.A."/>
            <person name="Heiman T.J."/>
            <person name="Hernandez J.R."/>
            <person name="Houck J."/>
            <person name="Hostin D."/>
            <person name="Houston K.A."/>
            <person name="Howland T.J."/>
            <person name="Wei M.-H."/>
            <person name="Ibegwam C."/>
            <person name="Jalali M."/>
            <person name="Kalush F."/>
            <person name="Karpen G.H."/>
            <person name="Ke Z."/>
            <person name="Kennison J.A."/>
            <person name="Ketchum K.A."/>
            <person name="Kimmel B.E."/>
            <person name="Kodira C.D."/>
            <person name="Kraft C.L."/>
            <person name="Kravitz S."/>
            <person name="Kulp D."/>
            <person name="Lai Z."/>
            <person name="Lasko P."/>
            <person name="Lei Y."/>
            <person name="Levitsky A.A."/>
            <person name="Li J.H."/>
            <person name="Li Z."/>
            <person name="Liang Y."/>
            <person name="Lin X."/>
            <person name="Liu X."/>
            <person name="Mattei B."/>
            <person name="McIntosh T.C."/>
            <person name="McLeod M.P."/>
            <person name="McPherson D."/>
            <person name="Merkulov G."/>
            <person name="Milshina N.V."/>
            <person name="Mobarry C."/>
            <person name="Morris J."/>
            <person name="Moshrefi A."/>
            <person name="Mount S.M."/>
            <person name="Moy M."/>
            <person name="Murphy B."/>
            <person name="Murphy L."/>
            <person name="Muzny D.M."/>
            <person name="Nelson D.L."/>
            <person name="Nelson D.R."/>
            <person name="Nelson K.A."/>
            <person name="Nixon K."/>
            <person name="Nusskern D.R."/>
            <person name="Pacleb J.M."/>
            <person name="Palazzolo M."/>
            <person name="Pittman G.S."/>
            <person name="Pan S."/>
            <person name="Pollard J."/>
            <person name="Puri V."/>
            <person name="Reese M.G."/>
            <person name="Reinert K."/>
            <person name="Remington K."/>
            <person name="Saunders R.D.C."/>
            <person name="Scheeler F."/>
            <person name="Shen H."/>
            <person name="Shue B.C."/>
            <person name="Siden-Kiamos I."/>
            <person name="Simpson M."/>
            <person name="Skupski M.P."/>
            <person name="Smith T.J."/>
            <person name="Spier E."/>
            <person name="Spradling A.C."/>
            <person name="Stapleton M."/>
            <person name="Strong R."/>
            <person name="Sun E."/>
            <person name="Svirskas R."/>
            <person name="Tector C."/>
            <person name="Turner R."/>
            <person name="Venter E."/>
            <person name="Wang A.H."/>
            <person name="Wang X."/>
            <person name="Wang Z.-Y."/>
            <person name="Wassarman D.A."/>
            <person name="Weinstock G.M."/>
            <person name="Weissenbach J."/>
            <person name="Williams S.M."/>
            <person name="Woodage T."/>
            <person name="Worley K.C."/>
            <person name="Wu D."/>
            <person name="Yang S."/>
            <person name="Yao Q.A."/>
            <person name="Ye J."/>
            <person name="Yeh R.-F."/>
            <person name="Zaveri J.S."/>
            <person name="Zhan M."/>
            <person name="Zhang G."/>
            <person name="Zhao Q."/>
            <person name="Zheng L."/>
            <person name="Zheng X.H."/>
            <person name="Zhong F.N."/>
            <person name="Zhong W."/>
            <person name="Zhou X."/>
            <person name="Zhu S.C."/>
            <person name="Zhu X."/>
            <person name="Smith H.O."/>
            <person name="Gibbs R.A."/>
            <person name="Myers E.W."/>
            <person name="Rubin G.M."/>
            <person name="Venter J.C."/>
        </authorList>
    </citation>
    <scope>NUCLEOTIDE SEQUENCE [LARGE SCALE GENOMIC DNA]</scope>
    <source>
        <strain>Berkeley</strain>
    </source>
</reference>
<reference key="2">
    <citation type="journal article" date="2002" name="Genome Biol.">
        <title>Annotation of the Drosophila melanogaster euchromatic genome: a systematic review.</title>
        <authorList>
            <person name="Misra S."/>
            <person name="Crosby M.A."/>
            <person name="Mungall C.J."/>
            <person name="Matthews B.B."/>
            <person name="Campbell K.S."/>
            <person name="Hradecky P."/>
            <person name="Huang Y."/>
            <person name="Kaminker J.S."/>
            <person name="Millburn G.H."/>
            <person name="Prochnik S.E."/>
            <person name="Smith C.D."/>
            <person name="Tupy J.L."/>
            <person name="Whitfield E.J."/>
            <person name="Bayraktaroglu L."/>
            <person name="Berman B.P."/>
            <person name="Bettencourt B.R."/>
            <person name="Celniker S.E."/>
            <person name="de Grey A.D.N.J."/>
            <person name="Drysdale R.A."/>
            <person name="Harris N.L."/>
            <person name="Richter J."/>
            <person name="Russo S."/>
            <person name="Schroeder A.J."/>
            <person name="Shu S.Q."/>
            <person name="Stapleton M."/>
            <person name="Yamada C."/>
            <person name="Ashburner M."/>
            <person name="Gelbart W.M."/>
            <person name="Rubin G.M."/>
            <person name="Lewis S.E."/>
        </authorList>
    </citation>
    <scope>GENOME REANNOTATION</scope>
    <source>
        <strain>Berkeley</strain>
    </source>
</reference>
<reference key="3">
    <citation type="journal article" date="1999" name="Neuron">
        <title>A novel family of divergent seven-transmembrane proteins: candidate odorant receptors in Drosophila.</title>
        <authorList>
            <person name="Clyne P.J."/>
            <person name="Warr C.G."/>
            <person name="Freeman M.R."/>
            <person name="Lessing D."/>
            <person name="Kim J."/>
            <person name="Carlson J.R."/>
        </authorList>
    </citation>
    <scope>IDENTIFICATION</scope>
    <scope>TISSUE SPECIFICITY</scope>
</reference>
<reference key="4">
    <citation type="journal article" date="2011" name="J. Neurosci.">
        <title>Similar odorants elicit different behavioral and physiological responses, some supersustained.</title>
        <authorList>
            <person name="Montague S.A."/>
            <person name="Mathew D."/>
            <person name="Carlson J.R."/>
        </authorList>
    </citation>
    <scope>FUNCTION</scope>
</reference>
<gene>
    <name type="primary">Or22c</name>
    <name type="synonym">DOR22C.1</name>
    <name type="synonym">Or22C.1</name>
    <name type="ORF">CG15377</name>
</gene>
<comment type="function">
    <text evidence="4">Odorant receptor which mediates acceptance or avoidance behavior, depending on its substrates. The odorant receptor repertoire encodes a large collection of odor stimuli that vary widely in identity, intensity, and duration. May form a complex with Orco to form odorant-sensing units, providing sensitive and prolonged odorant signaling and calcium permeability.</text>
</comment>
<comment type="subunit">
    <text evidence="1">Interacts with Orco. Complexes exist early in the endomembrane system in olfactory sensory neurons (OSNs), coupling these complexes to the conserved ciliary trafficking pathway (By similarity).</text>
</comment>
<comment type="subcellular location">
    <subcellularLocation>
        <location evidence="1">Cell membrane</location>
        <topology evidence="1">Multi-pass membrane protein</topology>
    </subcellularLocation>
</comment>
<comment type="tissue specificity">
    <text evidence="3">Not expressed in either the antenna or maxillary palp.</text>
</comment>
<comment type="miscellaneous">
    <text>The atypical heteromeric and topological design of the odorant receptors appears to be an insect-specific solution for odor recognition, making the OR/Orco complex an attractive target for the development of highly selective insect repellents to disrupt olfactory-mediated host-seeking behaviors of insect disease vectors. Odor-evoked OR currents are independent of known G-protein-coupled second messenger pathways.</text>
</comment>
<comment type="similarity">
    <text evidence="5">Belongs to the insect chemoreceptor superfamily. Heteromeric odorant receptor channel (TC 1.A.69) family. Or1a subfamily.</text>
</comment>
<dbReference type="EMBL" id="AE014134">
    <property type="protein sequence ID" value="AAF51309.2"/>
    <property type="molecule type" value="Genomic_DNA"/>
</dbReference>
<dbReference type="RefSeq" id="NP_523454.2">
    <property type="nucleotide sequence ID" value="NM_078730.3"/>
</dbReference>
<dbReference type="SMR" id="P81911"/>
<dbReference type="FunCoup" id="P81911">
    <property type="interactions" value="38"/>
</dbReference>
<dbReference type="IntAct" id="P81911">
    <property type="interactions" value="1"/>
</dbReference>
<dbReference type="STRING" id="7227.FBpp0077499"/>
<dbReference type="PaxDb" id="7227-FBpp0077499"/>
<dbReference type="EnsemblMetazoa" id="FBtr0077826">
    <property type="protein sequence ID" value="FBpp0077499"/>
    <property type="gene ID" value="FBgn0026396"/>
</dbReference>
<dbReference type="GeneID" id="33381"/>
<dbReference type="KEGG" id="dme:Dmel_CG15377"/>
<dbReference type="AGR" id="FB:FBgn0026396"/>
<dbReference type="CTD" id="33381"/>
<dbReference type="FlyBase" id="FBgn0026396">
    <property type="gene designation" value="Or22c"/>
</dbReference>
<dbReference type="VEuPathDB" id="VectorBase:FBgn0026396"/>
<dbReference type="eggNOG" id="ENOG502T1BY">
    <property type="taxonomic scope" value="Eukaryota"/>
</dbReference>
<dbReference type="GeneTree" id="ENSGT00940000166470"/>
<dbReference type="HOGENOM" id="CLU_033399_7_0_1"/>
<dbReference type="InParanoid" id="P81911"/>
<dbReference type="OMA" id="WYKCDAR"/>
<dbReference type="OrthoDB" id="8185860at2759"/>
<dbReference type="PhylomeDB" id="P81911"/>
<dbReference type="SignaLink" id="P81911"/>
<dbReference type="BioGRID-ORCS" id="33381">
    <property type="hits" value="0 hits in 1 CRISPR screen"/>
</dbReference>
<dbReference type="GenomeRNAi" id="33381"/>
<dbReference type="PRO" id="PR:P81911"/>
<dbReference type="Proteomes" id="UP000000803">
    <property type="component" value="Chromosome 2L"/>
</dbReference>
<dbReference type="Bgee" id="FBgn0026396">
    <property type="expression patterns" value="Expressed in peptidergic neuron (Drosophila) in brain and 1 other cell type or tissue"/>
</dbReference>
<dbReference type="ExpressionAtlas" id="P81911">
    <property type="expression patterns" value="baseline and differential"/>
</dbReference>
<dbReference type="GO" id="GO:0034703">
    <property type="term" value="C:cation channel complex"/>
    <property type="evidence" value="ECO:0000250"/>
    <property type="project" value="FlyBase"/>
</dbReference>
<dbReference type="GO" id="GO:0032590">
    <property type="term" value="C:dendrite membrane"/>
    <property type="evidence" value="ECO:0000250"/>
    <property type="project" value="FlyBase"/>
</dbReference>
<dbReference type="GO" id="GO:0016020">
    <property type="term" value="C:membrane"/>
    <property type="evidence" value="ECO:0000303"/>
    <property type="project" value="UniProtKB"/>
</dbReference>
<dbReference type="GO" id="GO:0005886">
    <property type="term" value="C:plasma membrane"/>
    <property type="evidence" value="ECO:0000250"/>
    <property type="project" value="FlyBase"/>
</dbReference>
<dbReference type="GO" id="GO:0170020">
    <property type="term" value="F:ionotropic olfactory receptor activity"/>
    <property type="evidence" value="ECO:0000250"/>
    <property type="project" value="FlyBase"/>
</dbReference>
<dbReference type="GO" id="GO:0005549">
    <property type="term" value="F:odorant binding"/>
    <property type="evidence" value="ECO:0000250"/>
    <property type="project" value="FlyBase"/>
</dbReference>
<dbReference type="GO" id="GO:0004984">
    <property type="term" value="F:olfactory receptor activity"/>
    <property type="evidence" value="ECO:0000318"/>
    <property type="project" value="GO_Central"/>
</dbReference>
<dbReference type="GO" id="GO:0050911">
    <property type="term" value="P:detection of chemical stimulus involved in sensory perception of smell"/>
    <property type="evidence" value="ECO:0000250"/>
    <property type="project" value="FlyBase"/>
</dbReference>
<dbReference type="GO" id="GO:0007608">
    <property type="term" value="P:sensory perception of smell"/>
    <property type="evidence" value="ECO:0000303"/>
    <property type="project" value="UniProtKB"/>
</dbReference>
<dbReference type="GO" id="GO:0007165">
    <property type="term" value="P:signal transduction"/>
    <property type="evidence" value="ECO:0007669"/>
    <property type="project" value="UniProtKB-KW"/>
</dbReference>
<dbReference type="InterPro" id="IPR004117">
    <property type="entry name" value="7tm6_olfct_rcpt"/>
</dbReference>
<dbReference type="PANTHER" id="PTHR21137">
    <property type="entry name" value="ODORANT RECEPTOR"/>
    <property type="match status" value="1"/>
</dbReference>
<dbReference type="PANTHER" id="PTHR21137:SF26">
    <property type="entry name" value="ODORANT RECEPTOR 10A-RELATED"/>
    <property type="match status" value="1"/>
</dbReference>
<dbReference type="Pfam" id="PF02949">
    <property type="entry name" value="7tm_6"/>
    <property type="match status" value="1"/>
</dbReference>
<accession>P81911</accession>
<accession>Q9VQ70</accession>
<sequence>MTDSGQPAIADHFYRIPRISGLIVGLWPQRIRGGGGRPWHAHLLFVFAFAMVVVGAVGEVSYGCVHLDNLVVALEAFCPGTTKAVCVLKLWVFFRSNRRWAELVQRLRAILWESRRQEAQRMLVGLATTANRLSLLLLSSGTATNAAFTLQPLIMGLYRWIVQLPGQTELPFNIILPSFAVQPGVFPLTYVLLTASGACTVFAFSFVDGFFICSCLYICGAFRLVQQDIRRIFADLHGDSVDVFTEEMNAEVRHRLAQVVERHNAIIDFCTDLTRQFTVIVLMHFLSAAFVLCSTILDIMLNTSSLSGLTYICYIIAALTQLFLYCFGGNHVSESSAAVADVLYDMEWYKCDARTRKVILMILRRSQRAKTIAVPFFTPSLPALRSILSTAGSYITLLKTFL</sequence>
<keyword id="KW-1003">Cell membrane</keyword>
<keyword id="KW-0472">Membrane</keyword>
<keyword id="KW-0552">Olfaction</keyword>
<keyword id="KW-0675">Receptor</keyword>
<keyword id="KW-1185">Reference proteome</keyword>
<keyword id="KW-0716">Sensory transduction</keyword>
<keyword id="KW-0807">Transducer</keyword>
<keyword id="KW-0812">Transmembrane</keyword>
<keyword id="KW-1133">Transmembrane helix</keyword>
<evidence type="ECO:0000250" key="1"/>
<evidence type="ECO:0000255" key="2"/>
<evidence type="ECO:0000269" key="3">
    <source>
    </source>
</evidence>
<evidence type="ECO:0000269" key="4">
    <source>
    </source>
</evidence>
<evidence type="ECO:0000305" key="5"/>
<organism>
    <name type="scientific">Drosophila melanogaster</name>
    <name type="common">Fruit fly</name>
    <dbReference type="NCBI Taxonomy" id="7227"/>
    <lineage>
        <taxon>Eukaryota</taxon>
        <taxon>Metazoa</taxon>
        <taxon>Ecdysozoa</taxon>
        <taxon>Arthropoda</taxon>
        <taxon>Hexapoda</taxon>
        <taxon>Insecta</taxon>
        <taxon>Pterygota</taxon>
        <taxon>Neoptera</taxon>
        <taxon>Endopterygota</taxon>
        <taxon>Diptera</taxon>
        <taxon>Brachycera</taxon>
        <taxon>Muscomorpha</taxon>
        <taxon>Ephydroidea</taxon>
        <taxon>Drosophilidae</taxon>
        <taxon>Drosophila</taxon>
        <taxon>Sophophora</taxon>
    </lineage>
</organism>
<protein>
    <recommendedName>
        <fullName>Odorant receptor 22c</fullName>
    </recommendedName>
</protein>
<name>OR22C_DROME</name>
<feature type="chain" id="PRO_0000174234" description="Odorant receptor 22c">
    <location>
        <begin position="1"/>
        <end position="402"/>
    </location>
</feature>
<feature type="topological domain" description="Cytoplasmic" evidence="2">
    <location>
        <begin position="1"/>
        <end position="42"/>
    </location>
</feature>
<feature type="transmembrane region" description="Helical; Name=1" evidence="2">
    <location>
        <begin position="43"/>
        <end position="63"/>
    </location>
</feature>
<feature type="topological domain" description="Extracellular" evidence="2">
    <location>
        <begin position="64"/>
        <end position="73"/>
    </location>
</feature>
<feature type="transmembrane region" description="Helical; Name=2" evidence="2">
    <location>
        <begin position="74"/>
        <end position="94"/>
    </location>
</feature>
<feature type="topological domain" description="Cytoplasmic" evidence="2">
    <location>
        <begin position="95"/>
        <end position="134"/>
    </location>
</feature>
<feature type="transmembrane region" description="Helical; Name=3" evidence="2">
    <location>
        <begin position="135"/>
        <end position="155"/>
    </location>
</feature>
<feature type="topological domain" description="Extracellular" evidence="2">
    <location>
        <begin position="156"/>
        <end position="173"/>
    </location>
</feature>
<feature type="transmembrane region" description="Helical; Name=4" evidence="2">
    <location>
        <begin position="174"/>
        <end position="194"/>
    </location>
</feature>
<feature type="topological domain" description="Cytoplasmic" evidence="2">
    <location>
        <begin position="195"/>
        <end position="201"/>
    </location>
</feature>
<feature type="transmembrane region" description="Helical; Name=5" evidence="2">
    <location>
        <begin position="202"/>
        <end position="222"/>
    </location>
</feature>
<feature type="topological domain" description="Extracellular" evidence="2">
    <location>
        <begin position="223"/>
        <end position="276"/>
    </location>
</feature>
<feature type="transmembrane region" description="Helical; Name=6" evidence="2">
    <location>
        <begin position="277"/>
        <end position="297"/>
    </location>
</feature>
<feature type="topological domain" description="Cytoplasmic" evidence="2">
    <location>
        <begin position="298"/>
        <end position="307"/>
    </location>
</feature>
<feature type="transmembrane region" description="Helical; Name=7" evidence="2">
    <location>
        <begin position="308"/>
        <end position="328"/>
    </location>
</feature>
<feature type="topological domain" description="Extracellular" evidence="2">
    <location>
        <begin position="329"/>
        <end position="402"/>
    </location>
</feature>
<proteinExistence type="evidence at transcript level"/>